<keyword id="KW-0093">Biotin biosynthesis</keyword>
<keyword id="KW-0663">Pyridoxal phosphate</keyword>
<keyword id="KW-1185">Reference proteome</keyword>
<keyword id="KW-0808">Transferase</keyword>
<comment type="function">
    <text evidence="1">Catalyzes the decarboxylative condensation of pimeloyl-[acyl-carrier protein] and L-alanine to produce 8-amino-7-oxononanoate (AON), [acyl-carrier protein], and carbon dioxide.</text>
</comment>
<comment type="catalytic activity">
    <reaction evidence="1">
        <text>6-carboxyhexanoyl-[ACP] + L-alanine + H(+) = (8S)-8-amino-7-oxononanoate + holo-[ACP] + CO2</text>
        <dbReference type="Rhea" id="RHEA:42288"/>
        <dbReference type="Rhea" id="RHEA-COMP:9685"/>
        <dbReference type="Rhea" id="RHEA-COMP:9955"/>
        <dbReference type="ChEBI" id="CHEBI:15378"/>
        <dbReference type="ChEBI" id="CHEBI:16526"/>
        <dbReference type="ChEBI" id="CHEBI:57972"/>
        <dbReference type="ChEBI" id="CHEBI:64479"/>
        <dbReference type="ChEBI" id="CHEBI:78846"/>
        <dbReference type="ChEBI" id="CHEBI:149468"/>
        <dbReference type="EC" id="2.3.1.47"/>
    </reaction>
</comment>
<comment type="cofactor">
    <cofactor evidence="1">
        <name>pyridoxal 5'-phosphate</name>
        <dbReference type="ChEBI" id="CHEBI:597326"/>
    </cofactor>
</comment>
<comment type="pathway">
    <text evidence="1">Cofactor biosynthesis; biotin biosynthesis.</text>
</comment>
<comment type="subunit">
    <text evidence="1">Homodimer.</text>
</comment>
<comment type="similarity">
    <text evidence="1">Belongs to the class-II pyridoxal-phosphate-dependent aminotransferase family. BioF subfamily.</text>
</comment>
<dbReference type="EC" id="2.3.1.47" evidence="1"/>
<dbReference type="EMBL" id="CU928161">
    <property type="protein sequence ID" value="CAR02132.1"/>
    <property type="molecule type" value="Genomic_DNA"/>
</dbReference>
<dbReference type="RefSeq" id="WP_000638121.1">
    <property type="nucleotide sequence ID" value="NC_011742.1"/>
</dbReference>
<dbReference type="SMR" id="B7MGN4"/>
<dbReference type="KEGG" id="ecz:ECS88_0793"/>
<dbReference type="HOGENOM" id="CLU_015846_11_2_6"/>
<dbReference type="UniPathway" id="UPA00078"/>
<dbReference type="Proteomes" id="UP000000747">
    <property type="component" value="Chromosome"/>
</dbReference>
<dbReference type="GO" id="GO:0008710">
    <property type="term" value="F:8-amino-7-oxononanoate synthase activity"/>
    <property type="evidence" value="ECO:0007669"/>
    <property type="project" value="UniProtKB-UniRule"/>
</dbReference>
<dbReference type="GO" id="GO:0030170">
    <property type="term" value="F:pyridoxal phosphate binding"/>
    <property type="evidence" value="ECO:0007669"/>
    <property type="project" value="UniProtKB-UniRule"/>
</dbReference>
<dbReference type="GO" id="GO:0009102">
    <property type="term" value="P:biotin biosynthetic process"/>
    <property type="evidence" value="ECO:0007669"/>
    <property type="project" value="UniProtKB-UniRule"/>
</dbReference>
<dbReference type="CDD" id="cd06454">
    <property type="entry name" value="KBL_like"/>
    <property type="match status" value="1"/>
</dbReference>
<dbReference type="FunFam" id="3.40.640.10:FF:000095">
    <property type="entry name" value="8-amino-7-oxononanoate synthase"/>
    <property type="match status" value="1"/>
</dbReference>
<dbReference type="FunFam" id="3.90.1150.10:FF:000036">
    <property type="entry name" value="8-amino-7-oxononanoate synthase"/>
    <property type="match status" value="1"/>
</dbReference>
<dbReference type="Gene3D" id="3.90.1150.10">
    <property type="entry name" value="Aspartate Aminotransferase, domain 1"/>
    <property type="match status" value="1"/>
</dbReference>
<dbReference type="Gene3D" id="3.40.640.10">
    <property type="entry name" value="Type I PLP-dependent aspartate aminotransferase-like (Major domain)"/>
    <property type="match status" value="1"/>
</dbReference>
<dbReference type="HAMAP" id="MF_01693">
    <property type="entry name" value="BioF_aminotrans_2"/>
    <property type="match status" value="1"/>
</dbReference>
<dbReference type="InterPro" id="IPR001917">
    <property type="entry name" value="Aminotrans_II_pyridoxalP_BS"/>
</dbReference>
<dbReference type="InterPro" id="IPR004839">
    <property type="entry name" value="Aminotransferase_I/II_large"/>
</dbReference>
<dbReference type="InterPro" id="IPR050087">
    <property type="entry name" value="AON_synthase_class-II"/>
</dbReference>
<dbReference type="InterPro" id="IPR004723">
    <property type="entry name" value="AONS_Archaea/Proteobacteria"/>
</dbReference>
<dbReference type="InterPro" id="IPR022834">
    <property type="entry name" value="AONS_Proteobacteria"/>
</dbReference>
<dbReference type="InterPro" id="IPR015424">
    <property type="entry name" value="PyrdxlP-dep_Trfase"/>
</dbReference>
<dbReference type="InterPro" id="IPR015421">
    <property type="entry name" value="PyrdxlP-dep_Trfase_major"/>
</dbReference>
<dbReference type="InterPro" id="IPR015422">
    <property type="entry name" value="PyrdxlP-dep_Trfase_small"/>
</dbReference>
<dbReference type="NCBIfam" id="TIGR00858">
    <property type="entry name" value="bioF"/>
    <property type="match status" value="1"/>
</dbReference>
<dbReference type="PANTHER" id="PTHR13693:SF100">
    <property type="entry name" value="8-AMINO-7-OXONONANOATE SYNTHASE"/>
    <property type="match status" value="1"/>
</dbReference>
<dbReference type="PANTHER" id="PTHR13693">
    <property type="entry name" value="CLASS II AMINOTRANSFERASE/8-AMINO-7-OXONONANOATE SYNTHASE"/>
    <property type="match status" value="1"/>
</dbReference>
<dbReference type="Pfam" id="PF00155">
    <property type="entry name" value="Aminotran_1_2"/>
    <property type="match status" value="1"/>
</dbReference>
<dbReference type="SUPFAM" id="SSF53383">
    <property type="entry name" value="PLP-dependent transferases"/>
    <property type="match status" value="1"/>
</dbReference>
<dbReference type="PROSITE" id="PS00599">
    <property type="entry name" value="AA_TRANSFER_CLASS_2"/>
    <property type="match status" value="1"/>
</dbReference>
<protein>
    <recommendedName>
        <fullName evidence="1">8-amino-7-oxononanoate synthase</fullName>
        <shortName evidence="1">AONS</shortName>
        <ecNumber evidence="1">2.3.1.47</ecNumber>
    </recommendedName>
    <alternativeName>
        <fullName evidence="1">7-keto-8-amino-pelargonic acid synthase</fullName>
        <shortName evidence="1">7-KAP synthase</shortName>
        <shortName evidence="1">KAPA synthase</shortName>
    </alternativeName>
    <alternativeName>
        <fullName evidence="1">8-amino-7-ketopelargonate synthase</fullName>
    </alternativeName>
</protein>
<sequence length="384" mass="41575">MIWQEKIDAALDARRVADALRRRYPVAQGAGRWLVADDCQYLNFSSNDYLGLSHHPQIIRAWQQGADQFGVGSGGSGHVSGYSVAHQVLEEELAEWLGYSRALLFISGFAANQAVIAAMMAKEDRIVADRLSHASLLEAASLSPSPLRRFAHNDVTHLARLLASPCPGQQLVVTEGVFSMDGDSAPLEEIQQVTQQHDGWLMVDDAHGTGVIGEQGRGSCWLQKVKPELLVVTFGKGFGVSGAAVLCSNTVADYLLQFARHLIYSTSMPPAQAQALRASLAVIRSDEGDARREKLAALITRFRAGVQDLPFTLAGSCSAIQPLIVGDNSRALQLAEKLRQQGCWVTAIRPPTVPAGTARLRLTLTAAHEMQDIDRLLEVLHGNG</sequence>
<feature type="chain" id="PRO_0000380969" description="8-amino-7-oxononanoate synthase">
    <location>
        <begin position="1"/>
        <end position="384"/>
    </location>
</feature>
<feature type="binding site" evidence="1">
    <location>
        <position position="21"/>
    </location>
    <ligand>
        <name>substrate</name>
    </ligand>
</feature>
<feature type="binding site" evidence="1">
    <location>
        <begin position="108"/>
        <end position="109"/>
    </location>
    <ligand>
        <name>pyridoxal 5'-phosphate</name>
        <dbReference type="ChEBI" id="CHEBI:597326"/>
    </ligand>
</feature>
<feature type="binding site" evidence="1">
    <location>
        <position position="133"/>
    </location>
    <ligand>
        <name>substrate</name>
    </ligand>
</feature>
<feature type="binding site" evidence="1">
    <location>
        <position position="179"/>
    </location>
    <ligand>
        <name>pyridoxal 5'-phosphate</name>
        <dbReference type="ChEBI" id="CHEBI:597326"/>
    </ligand>
</feature>
<feature type="binding site" evidence="1">
    <location>
        <position position="207"/>
    </location>
    <ligand>
        <name>pyridoxal 5'-phosphate</name>
        <dbReference type="ChEBI" id="CHEBI:597326"/>
    </ligand>
</feature>
<feature type="binding site" evidence="1">
    <location>
        <position position="233"/>
    </location>
    <ligand>
        <name>pyridoxal 5'-phosphate</name>
        <dbReference type="ChEBI" id="CHEBI:597326"/>
    </ligand>
</feature>
<feature type="binding site" evidence="1">
    <location>
        <position position="352"/>
    </location>
    <ligand>
        <name>substrate</name>
    </ligand>
</feature>
<feature type="modified residue" description="N6-(pyridoxal phosphate)lysine" evidence="1">
    <location>
        <position position="236"/>
    </location>
</feature>
<accession>B7MGN4</accession>
<organism>
    <name type="scientific">Escherichia coli O45:K1 (strain S88 / ExPEC)</name>
    <dbReference type="NCBI Taxonomy" id="585035"/>
    <lineage>
        <taxon>Bacteria</taxon>
        <taxon>Pseudomonadati</taxon>
        <taxon>Pseudomonadota</taxon>
        <taxon>Gammaproteobacteria</taxon>
        <taxon>Enterobacterales</taxon>
        <taxon>Enterobacteriaceae</taxon>
        <taxon>Escherichia</taxon>
    </lineage>
</organism>
<name>BIOF_ECO45</name>
<evidence type="ECO:0000255" key="1">
    <source>
        <dbReference type="HAMAP-Rule" id="MF_01693"/>
    </source>
</evidence>
<gene>
    <name evidence="1" type="primary">bioF</name>
    <name type="ordered locus">ECS88_0793</name>
</gene>
<reference key="1">
    <citation type="journal article" date="2009" name="PLoS Genet.">
        <title>Organised genome dynamics in the Escherichia coli species results in highly diverse adaptive paths.</title>
        <authorList>
            <person name="Touchon M."/>
            <person name="Hoede C."/>
            <person name="Tenaillon O."/>
            <person name="Barbe V."/>
            <person name="Baeriswyl S."/>
            <person name="Bidet P."/>
            <person name="Bingen E."/>
            <person name="Bonacorsi S."/>
            <person name="Bouchier C."/>
            <person name="Bouvet O."/>
            <person name="Calteau A."/>
            <person name="Chiapello H."/>
            <person name="Clermont O."/>
            <person name="Cruveiller S."/>
            <person name="Danchin A."/>
            <person name="Diard M."/>
            <person name="Dossat C."/>
            <person name="Karoui M.E."/>
            <person name="Frapy E."/>
            <person name="Garry L."/>
            <person name="Ghigo J.M."/>
            <person name="Gilles A.M."/>
            <person name="Johnson J."/>
            <person name="Le Bouguenec C."/>
            <person name="Lescat M."/>
            <person name="Mangenot S."/>
            <person name="Martinez-Jehanne V."/>
            <person name="Matic I."/>
            <person name="Nassif X."/>
            <person name="Oztas S."/>
            <person name="Petit M.A."/>
            <person name="Pichon C."/>
            <person name="Rouy Z."/>
            <person name="Ruf C.S."/>
            <person name="Schneider D."/>
            <person name="Tourret J."/>
            <person name="Vacherie B."/>
            <person name="Vallenet D."/>
            <person name="Medigue C."/>
            <person name="Rocha E.P.C."/>
            <person name="Denamur E."/>
        </authorList>
    </citation>
    <scope>NUCLEOTIDE SEQUENCE [LARGE SCALE GENOMIC DNA]</scope>
    <source>
        <strain>S88 / ExPEC</strain>
    </source>
</reference>
<proteinExistence type="inferred from homology"/>